<feature type="chain" id="PRO_0000234992" description="Serine hydroxymethyltransferase">
    <location>
        <begin position="1"/>
        <end position="417"/>
    </location>
</feature>
<feature type="binding site" evidence="1">
    <location>
        <position position="121"/>
    </location>
    <ligand>
        <name>(6S)-5,6,7,8-tetrahydrofolate</name>
        <dbReference type="ChEBI" id="CHEBI:57453"/>
    </ligand>
</feature>
<feature type="binding site" evidence="1">
    <location>
        <begin position="125"/>
        <end position="127"/>
    </location>
    <ligand>
        <name>(6S)-5,6,7,8-tetrahydrofolate</name>
        <dbReference type="ChEBI" id="CHEBI:57453"/>
    </ligand>
</feature>
<feature type="binding site" evidence="1">
    <location>
        <begin position="355"/>
        <end position="357"/>
    </location>
    <ligand>
        <name>(6S)-5,6,7,8-tetrahydrofolate</name>
        <dbReference type="ChEBI" id="CHEBI:57453"/>
    </ligand>
</feature>
<feature type="site" description="Plays an important role in substrate specificity" evidence="1">
    <location>
        <position position="229"/>
    </location>
</feature>
<feature type="modified residue" description="N6-(pyridoxal phosphate)lysine" evidence="1">
    <location>
        <position position="230"/>
    </location>
</feature>
<dbReference type="EC" id="2.1.2.1" evidence="1"/>
<dbReference type="EMBL" id="CP000127">
    <property type="protein sequence ID" value="ABA58488.1"/>
    <property type="molecule type" value="Genomic_DNA"/>
</dbReference>
<dbReference type="RefSeq" id="WP_002811316.1">
    <property type="nucleotide sequence ID" value="NC_007484.1"/>
</dbReference>
<dbReference type="SMR" id="Q3J9K8"/>
<dbReference type="FunCoup" id="Q3J9K8">
    <property type="interactions" value="569"/>
</dbReference>
<dbReference type="STRING" id="323261.Noc_2027"/>
<dbReference type="KEGG" id="noc:Noc_2027"/>
<dbReference type="eggNOG" id="COG0112">
    <property type="taxonomic scope" value="Bacteria"/>
</dbReference>
<dbReference type="HOGENOM" id="CLU_022477_2_1_6"/>
<dbReference type="InParanoid" id="Q3J9K8"/>
<dbReference type="UniPathway" id="UPA00193"/>
<dbReference type="UniPathway" id="UPA00288">
    <property type="reaction ID" value="UER01023"/>
</dbReference>
<dbReference type="Proteomes" id="UP000006838">
    <property type="component" value="Chromosome"/>
</dbReference>
<dbReference type="GO" id="GO:0005829">
    <property type="term" value="C:cytosol"/>
    <property type="evidence" value="ECO:0007669"/>
    <property type="project" value="TreeGrafter"/>
</dbReference>
<dbReference type="GO" id="GO:0004372">
    <property type="term" value="F:glycine hydroxymethyltransferase activity"/>
    <property type="evidence" value="ECO:0007669"/>
    <property type="project" value="UniProtKB-UniRule"/>
</dbReference>
<dbReference type="GO" id="GO:0030170">
    <property type="term" value="F:pyridoxal phosphate binding"/>
    <property type="evidence" value="ECO:0007669"/>
    <property type="project" value="UniProtKB-UniRule"/>
</dbReference>
<dbReference type="GO" id="GO:0019264">
    <property type="term" value="P:glycine biosynthetic process from serine"/>
    <property type="evidence" value="ECO:0007669"/>
    <property type="project" value="UniProtKB-UniRule"/>
</dbReference>
<dbReference type="GO" id="GO:0035999">
    <property type="term" value="P:tetrahydrofolate interconversion"/>
    <property type="evidence" value="ECO:0007669"/>
    <property type="project" value="UniProtKB-UniRule"/>
</dbReference>
<dbReference type="CDD" id="cd00378">
    <property type="entry name" value="SHMT"/>
    <property type="match status" value="1"/>
</dbReference>
<dbReference type="FunFam" id="3.40.640.10:FF:000001">
    <property type="entry name" value="Serine hydroxymethyltransferase"/>
    <property type="match status" value="1"/>
</dbReference>
<dbReference type="FunFam" id="3.90.1150.10:FF:000003">
    <property type="entry name" value="Serine hydroxymethyltransferase"/>
    <property type="match status" value="1"/>
</dbReference>
<dbReference type="Gene3D" id="3.90.1150.10">
    <property type="entry name" value="Aspartate Aminotransferase, domain 1"/>
    <property type="match status" value="1"/>
</dbReference>
<dbReference type="Gene3D" id="3.40.640.10">
    <property type="entry name" value="Type I PLP-dependent aspartate aminotransferase-like (Major domain)"/>
    <property type="match status" value="1"/>
</dbReference>
<dbReference type="HAMAP" id="MF_00051">
    <property type="entry name" value="SHMT"/>
    <property type="match status" value="1"/>
</dbReference>
<dbReference type="InterPro" id="IPR015424">
    <property type="entry name" value="PyrdxlP-dep_Trfase"/>
</dbReference>
<dbReference type="InterPro" id="IPR015421">
    <property type="entry name" value="PyrdxlP-dep_Trfase_major"/>
</dbReference>
<dbReference type="InterPro" id="IPR015422">
    <property type="entry name" value="PyrdxlP-dep_Trfase_small"/>
</dbReference>
<dbReference type="InterPro" id="IPR001085">
    <property type="entry name" value="Ser_HO-MeTrfase"/>
</dbReference>
<dbReference type="InterPro" id="IPR049943">
    <property type="entry name" value="Ser_HO-MeTrfase-like"/>
</dbReference>
<dbReference type="InterPro" id="IPR019798">
    <property type="entry name" value="Ser_HO-MeTrfase_PLP_BS"/>
</dbReference>
<dbReference type="InterPro" id="IPR039429">
    <property type="entry name" value="SHMT-like_dom"/>
</dbReference>
<dbReference type="NCBIfam" id="NF000586">
    <property type="entry name" value="PRK00011.1"/>
    <property type="match status" value="1"/>
</dbReference>
<dbReference type="PANTHER" id="PTHR11680">
    <property type="entry name" value="SERINE HYDROXYMETHYLTRANSFERASE"/>
    <property type="match status" value="1"/>
</dbReference>
<dbReference type="PANTHER" id="PTHR11680:SF50">
    <property type="entry name" value="SERINE HYDROXYMETHYLTRANSFERASE"/>
    <property type="match status" value="1"/>
</dbReference>
<dbReference type="Pfam" id="PF00464">
    <property type="entry name" value="SHMT"/>
    <property type="match status" value="1"/>
</dbReference>
<dbReference type="PIRSF" id="PIRSF000412">
    <property type="entry name" value="SHMT"/>
    <property type="match status" value="1"/>
</dbReference>
<dbReference type="SUPFAM" id="SSF53383">
    <property type="entry name" value="PLP-dependent transferases"/>
    <property type="match status" value="1"/>
</dbReference>
<dbReference type="PROSITE" id="PS00096">
    <property type="entry name" value="SHMT"/>
    <property type="match status" value="1"/>
</dbReference>
<gene>
    <name evidence="1" type="primary">glyA</name>
    <name type="ordered locus">Noc_2027</name>
</gene>
<evidence type="ECO:0000255" key="1">
    <source>
        <dbReference type="HAMAP-Rule" id="MF_00051"/>
    </source>
</evidence>
<reference key="1">
    <citation type="journal article" date="2006" name="Appl. Environ. Microbiol.">
        <title>Complete genome sequence of the marine, chemolithoautotrophic, ammonia-oxidizing bacterium Nitrosococcus oceani ATCC 19707.</title>
        <authorList>
            <person name="Klotz M.G."/>
            <person name="Arp D.J."/>
            <person name="Chain P.S.G."/>
            <person name="El-Sheikh A.F."/>
            <person name="Hauser L.J."/>
            <person name="Hommes N.G."/>
            <person name="Larimer F.W."/>
            <person name="Malfatti S.A."/>
            <person name="Norton J.M."/>
            <person name="Poret-Peterson A.T."/>
            <person name="Vergez L.M."/>
            <person name="Ward B.B."/>
        </authorList>
    </citation>
    <scope>NUCLEOTIDE SEQUENCE [LARGE SCALE GENOMIC DNA]</scope>
    <source>
        <strain>ATCC 19707 / BCRC 17464 / JCM 30415 / NCIMB 11848 / C-107</strain>
    </source>
</reference>
<proteinExistence type="inferred from homology"/>
<keyword id="KW-0028">Amino-acid biosynthesis</keyword>
<keyword id="KW-0963">Cytoplasm</keyword>
<keyword id="KW-0554">One-carbon metabolism</keyword>
<keyword id="KW-0663">Pyridoxal phosphate</keyword>
<keyword id="KW-1185">Reference proteome</keyword>
<keyword id="KW-0808">Transferase</keyword>
<accession>Q3J9K8</accession>
<protein>
    <recommendedName>
        <fullName evidence="1">Serine hydroxymethyltransferase</fullName>
        <shortName evidence="1">SHMT</shortName>
        <shortName evidence="1">Serine methylase</shortName>
        <ecNumber evidence="1">2.1.2.1</ecNumber>
    </recommendedName>
</protein>
<sequence length="417" mass="44998">MYSKEMRIASYDEELETALTNEARRQEEHIELIASENYVSPRVLEAQGSVLTNKYAEGYPGKRYYGGCEYVDVAERLAIERAKILFEADYANVQPHSGSQANAAACLALLAPGDTLMGLSLAHGGHLTHGAKVNFSGQIFNAVQFGVNADTGLIDYDEVEQLAKAHRPKLIIAGFTAYSRIVDWQRFRAIADGVGAYLLADIAHLAGMIAAGIYPNPVQIADVTTSTTHKTLRGPRSGLILAKANPEIEKKLNSKVFPGIQGGPLMHVVAAKAVAFKEAMEPAFKDYQRQVIRNAQAMAEAIQSRGYKIVSGGTDSHLFLVDLVAKGLTGKAADAALGRANITVNKNTVPNDPQSPFVTSGIRIGSPAMTTRGFKEAEICELAGWVCDVLDDIENETVIADTKEKVLALCARFPVYG</sequence>
<name>GLYA_NITOC</name>
<comment type="function">
    <text evidence="1">Catalyzes the reversible interconversion of serine and glycine with tetrahydrofolate (THF) serving as the one-carbon carrier. This reaction serves as the major source of one-carbon groups required for the biosynthesis of purines, thymidylate, methionine, and other important biomolecules. Also exhibits THF-independent aldolase activity toward beta-hydroxyamino acids, producing glycine and aldehydes, via a retro-aldol mechanism.</text>
</comment>
<comment type="catalytic activity">
    <reaction evidence="1">
        <text>(6R)-5,10-methylene-5,6,7,8-tetrahydrofolate + glycine + H2O = (6S)-5,6,7,8-tetrahydrofolate + L-serine</text>
        <dbReference type="Rhea" id="RHEA:15481"/>
        <dbReference type="ChEBI" id="CHEBI:15377"/>
        <dbReference type="ChEBI" id="CHEBI:15636"/>
        <dbReference type="ChEBI" id="CHEBI:33384"/>
        <dbReference type="ChEBI" id="CHEBI:57305"/>
        <dbReference type="ChEBI" id="CHEBI:57453"/>
        <dbReference type="EC" id="2.1.2.1"/>
    </reaction>
</comment>
<comment type="cofactor">
    <cofactor evidence="1">
        <name>pyridoxal 5'-phosphate</name>
        <dbReference type="ChEBI" id="CHEBI:597326"/>
    </cofactor>
</comment>
<comment type="pathway">
    <text evidence="1">One-carbon metabolism; tetrahydrofolate interconversion.</text>
</comment>
<comment type="pathway">
    <text evidence="1">Amino-acid biosynthesis; glycine biosynthesis; glycine from L-serine: step 1/1.</text>
</comment>
<comment type="subunit">
    <text evidence="1">Homodimer.</text>
</comment>
<comment type="subcellular location">
    <subcellularLocation>
        <location evidence="1">Cytoplasm</location>
    </subcellularLocation>
</comment>
<comment type="similarity">
    <text evidence="1">Belongs to the SHMT family.</text>
</comment>
<organism>
    <name type="scientific">Nitrosococcus oceani (strain ATCC 19707 / BCRC 17464 / JCM 30415 / NCIMB 11848 / C-107)</name>
    <dbReference type="NCBI Taxonomy" id="323261"/>
    <lineage>
        <taxon>Bacteria</taxon>
        <taxon>Pseudomonadati</taxon>
        <taxon>Pseudomonadota</taxon>
        <taxon>Gammaproteobacteria</taxon>
        <taxon>Chromatiales</taxon>
        <taxon>Chromatiaceae</taxon>
        <taxon>Nitrosococcus</taxon>
    </lineage>
</organism>